<organism>
    <name type="scientific">Pseudomonas putida (strain W619)</name>
    <dbReference type="NCBI Taxonomy" id="390235"/>
    <lineage>
        <taxon>Bacteria</taxon>
        <taxon>Pseudomonadati</taxon>
        <taxon>Pseudomonadota</taxon>
        <taxon>Gammaproteobacteria</taxon>
        <taxon>Pseudomonadales</taxon>
        <taxon>Pseudomonadaceae</taxon>
        <taxon>Pseudomonas</taxon>
    </lineage>
</organism>
<gene>
    <name evidence="1" type="primary">clpX</name>
    <name type="ordered locus">PputW619_1743</name>
</gene>
<accession>B1J693</accession>
<reference key="1">
    <citation type="submission" date="2008-02" db="EMBL/GenBank/DDBJ databases">
        <title>Complete sequence of Pseudomonas putida W619.</title>
        <authorList>
            <person name="Copeland A."/>
            <person name="Lucas S."/>
            <person name="Lapidus A."/>
            <person name="Barry K."/>
            <person name="Detter J.C."/>
            <person name="Glavina del Rio T."/>
            <person name="Dalin E."/>
            <person name="Tice H."/>
            <person name="Pitluck S."/>
            <person name="Chain P."/>
            <person name="Malfatti S."/>
            <person name="Shin M."/>
            <person name="Vergez L."/>
            <person name="Schmutz J."/>
            <person name="Larimer F."/>
            <person name="Land M."/>
            <person name="Hauser L."/>
            <person name="Kyrpides N."/>
            <person name="Kim E."/>
            <person name="Taghavi S."/>
            <person name="Vangronsveld D."/>
            <person name="van der Lelie D."/>
            <person name="Richardson P."/>
        </authorList>
    </citation>
    <scope>NUCLEOTIDE SEQUENCE [LARGE SCALE GENOMIC DNA]</scope>
    <source>
        <strain>W619</strain>
    </source>
</reference>
<protein>
    <recommendedName>
        <fullName evidence="1">ATP-dependent Clp protease ATP-binding subunit ClpX</fullName>
    </recommendedName>
</protein>
<evidence type="ECO:0000255" key="1">
    <source>
        <dbReference type="HAMAP-Rule" id="MF_00175"/>
    </source>
</evidence>
<evidence type="ECO:0000255" key="2">
    <source>
        <dbReference type="PROSITE-ProRule" id="PRU01250"/>
    </source>
</evidence>
<keyword id="KW-0067">ATP-binding</keyword>
<keyword id="KW-0143">Chaperone</keyword>
<keyword id="KW-0479">Metal-binding</keyword>
<keyword id="KW-0547">Nucleotide-binding</keyword>
<keyword id="KW-0862">Zinc</keyword>
<name>CLPX_PSEPW</name>
<comment type="function">
    <text evidence="1">ATP-dependent specificity component of the Clp protease. It directs the protease to specific substrates. Can perform chaperone functions in the absence of ClpP.</text>
</comment>
<comment type="subunit">
    <text evidence="1">Component of the ClpX-ClpP complex. Forms a hexameric ring that, in the presence of ATP, binds to fourteen ClpP subunits assembled into a disk-like structure with a central cavity, resembling the structure of eukaryotic proteasomes.</text>
</comment>
<comment type="similarity">
    <text evidence="1">Belongs to the ClpX chaperone family.</text>
</comment>
<feature type="chain" id="PRO_1000097985" description="ATP-dependent Clp protease ATP-binding subunit ClpX">
    <location>
        <begin position="1"/>
        <end position="427"/>
    </location>
</feature>
<feature type="domain" description="ClpX-type ZB" evidence="2">
    <location>
        <begin position="4"/>
        <end position="57"/>
    </location>
</feature>
<feature type="binding site" evidence="2">
    <location>
        <position position="16"/>
    </location>
    <ligand>
        <name>Zn(2+)</name>
        <dbReference type="ChEBI" id="CHEBI:29105"/>
    </ligand>
</feature>
<feature type="binding site" evidence="2">
    <location>
        <position position="19"/>
    </location>
    <ligand>
        <name>Zn(2+)</name>
        <dbReference type="ChEBI" id="CHEBI:29105"/>
    </ligand>
</feature>
<feature type="binding site" evidence="2">
    <location>
        <position position="38"/>
    </location>
    <ligand>
        <name>Zn(2+)</name>
        <dbReference type="ChEBI" id="CHEBI:29105"/>
    </ligand>
</feature>
<feature type="binding site" evidence="2">
    <location>
        <position position="41"/>
    </location>
    <ligand>
        <name>Zn(2+)</name>
        <dbReference type="ChEBI" id="CHEBI:29105"/>
    </ligand>
</feature>
<feature type="binding site" evidence="1">
    <location>
        <begin position="122"/>
        <end position="129"/>
    </location>
    <ligand>
        <name>ATP</name>
        <dbReference type="ChEBI" id="CHEBI:30616"/>
    </ligand>
</feature>
<sequence length="427" mass="46908">MTDTRNGEDSGKLLYCSFCGKSQHEVRKLIAGPSVFICDECVDLCNDIIREEVQEAQAESSAHKLPSPKEISGILDQYVIGQERAKKVLSVAVYNHYKRLNQRDKKGDEVELGKSNILLIGPTGSGKTLLAETLARLLNVPFTIADATTLTEAGYVGEDVENIIQKLLQKCDYDVEKAQMGIVYIDEIDKISRKSDNPSITRDVSGEGVQQALLKLIEGTVASVPPQGGRKHPQQEFLQVDTRNILFICGGAFSGLEKVIQNRSTKGGIGFGAEVRSKEEGKKVGESLREVEPDDLVKFGLIPEFVGRLPVLATLDELDEAALMQILTEPKNALTKQYARLFEMESVDLEFRSDALKAVARKALERKTGARGLRSILEGVLLDTMYEIPSQKEVSKVVIDESVIEGTSQPLLIYENSEPQAKAAPDA</sequence>
<dbReference type="EMBL" id="CP000949">
    <property type="protein sequence ID" value="ACA72247.1"/>
    <property type="molecule type" value="Genomic_DNA"/>
</dbReference>
<dbReference type="SMR" id="B1J693"/>
<dbReference type="STRING" id="390235.PputW619_1743"/>
<dbReference type="KEGG" id="ppw:PputW619_1743"/>
<dbReference type="eggNOG" id="COG1219">
    <property type="taxonomic scope" value="Bacteria"/>
</dbReference>
<dbReference type="HOGENOM" id="CLU_014218_8_2_6"/>
<dbReference type="OrthoDB" id="9804062at2"/>
<dbReference type="GO" id="GO:0009376">
    <property type="term" value="C:HslUV protease complex"/>
    <property type="evidence" value="ECO:0007669"/>
    <property type="project" value="TreeGrafter"/>
</dbReference>
<dbReference type="GO" id="GO:0005524">
    <property type="term" value="F:ATP binding"/>
    <property type="evidence" value="ECO:0007669"/>
    <property type="project" value="UniProtKB-UniRule"/>
</dbReference>
<dbReference type="GO" id="GO:0016887">
    <property type="term" value="F:ATP hydrolysis activity"/>
    <property type="evidence" value="ECO:0007669"/>
    <property type="project" value="InterPro"/>
</dbReference>
<dbReference type="GO" id="GO:0140662">
    <property type="term" value="F:ATP-dependent protein folding chaperone"/>
    <property type="evidence" value="ECO:0007669"/>
    <property type="project" value="InterPro"/>
</dbReference>
<dbReference type="GO" id="GO:0046983">
    <property type="term" value="F:protein dimerization activity"/>
    <property type="evidence" value="ECO:0007669"/>
    <property type="project" value="InterPro"/>
</dbReference>
<dbReference type="GO" id="GO:0051082">
    <property type="term" value="F:unfolded protein binding"/>
    <property type="evidence" value="ECO:0007669"/>
    <property type="project" value="UniProtKB-UniRule"/>
</dbReference>
<dbReference type="GO" id="GO:0008270">
    <property type="term" value="F:zinc ion binding"/>
    <property type="evidence" value="ECO:0007669"/>
    <property type="project" value="InterPro"/>
</dbReference>
<dbReference type="GO" id="GO:0051301">
    <property type="term" value="P:cell division"/>
    <property type="evidence" value="ECO:0007669"/>
    <property type="project" value="TreeGrafter"/>
</dbReference>
<dbReference type="GO" id="GO:0051603">
    <property type="term" value="P:proteolysis involved in protein catabolic process"/>
    <property type="evidence" value="ECO:0007669"/>
    <property type="project" value="TreeGrafter"/>
</dbReference>
<dbReference type="CDD" id="cd19497">
    <property type="entry name" value="RecA-like_ClpX"/>
    <property type="match status" value="1"/>
</dbReference>
<dbReference type="FunFam" id="1.10.8.60:FF:000002">
    <property type="entry name" value="ATP-dependent Clp protease ATP-binding subunit ClpX"/>
    <property type="match status" value="1"/>
</dbReference>
<dbReference type="FunFam" id="3.40.50.300:FF:000005">
    <property type="entry name" value="ATP-dependent Clp protease ATP-binding subunit ClpX"/>
    <property type="match status" value="1"/>
</dbReference>
<dbReference type="Gene3D" id="1.10.8.60">
    <property type="match status" value="1"/>
</dbReference>
<dbReference type="Gene3D" id="6.20.220.10">
    <property type="entry name" value="ClpX chaperone, C4-type zinc finger domain"/>
    <property type="match status" value="1"/>
</dbReference>
<dbReference type="Gene3D" id="3.40.50.300">
    <property type="entry name" value="P-loop containing nucleotide triphosphate hydrolases"/>
    <property type="match status" value="1"/>
</dbReference>
<dbReference type="HAMAP" id="MF_00175">
    <property type="entry name" value="ClpX"/>
    <property type="match status" value="1"/>
</dbReference>
<dbReference type="InterPro" id="IPR003593">
    <property type="entry name" value="AAA+_ATPase"/>
</dbReference>
<dbReference type="InterPro" id="IPR050052">
    <property type="entry name" value="ATP-dep_Clp_protease_ClpX"/>
</dbReference>
<dbReference type="InterPro" id="IPR003959">
    <property type="entry name" value="ATPase_AAA_core"/>
</dbReference>
<dbReference type="InterPro" id="IPR019489">
    <property type="entry name" value="Clp_ATPase_C"/>
</dbReference>
<dbReference type="InterPro" id="IPR004487">
    <property type="entry name" value="Clp_protease_ATP-bd_su_ClpX"/>
</dbReference>
<dbReference type="InterPro" id="IPR046425">
    <property type="entry name" value="ClpX_bact"/>
</dbReference>
<dbReference type="InterPro" id="IPR027417">
    <property type="entry name" value="P-loop_NTPase"/>
</dbReference>
<dbReference type="InterPro" id="IPR010603">
    <property type="entry name" value="Znf_CppX_C4"/>
</dbReference>
<dbReference type="InterPro" id="IPR038366">
    <property type="entry name" value="Znf_CppX_C4_sf"/>
</dbReference>
<dbReference type="NCBIfam" id="TIGR00382">
    <property type="entry name" value="clpX"/>
    <property type="match status" value="1"/>
</dbReference>
<dbReference type="NCBIfam" id="NF003745">
    <property type="entry name" value="PRK05342.1"/>
    <property type="match status" value="1"/>
</dbReference>
<dbReference type="PANTHER" id="PTHR48102:SF7">
    <property type="entry name" value="ATP-DEPENDENT CLP PROTEASE ATP-BINDING SUBUNIT CLPX-LIKE, MITOCHONDRIAL"/>
    <property type="match status" value="1"/>
</dbReference>
<dbReference type="PANTHER" id="PTHR48102">
    <property type="entry name" value="ATP-DEPENDENT CLP PROTEASE ATP-BINDING SUBUNIT CLPX-LIKE, MITOCHONDRIAL-RELATED"/>
    <property type="match status" value="1"/>
</dbReference>
<dbReference type="Pfam" id="PF07724">
    <property type="entry name" value="AAA_2"/>
    <property type="match status" value="1"/>
</dbReference>
<dbReference type="Pfam" id="PF10431">
    <property type="entry name" value="ClpB_D2-small"/>
    <property type="match status" value="1"/>
</dbReference>
<dbReference type="Pfam" id="PF06689">
    <property type="entry name" value="zf-C4_ClpX"/>
    <property type="match status" value="1"/>
</dbReference>
<dbReference type="SMART" id="SM00382">
    <property type="entry name" value="AAA"/>
    <property type="match status" value="1"/>
</dbReference>
<dbReference type="SMART" id="SM01086">
    <property type="entry name" value="ClpB_D2-small"/>
    <property type="match status" value="1"/>
</dbReference>
<dbReference type="SMART" id="SM00994">
    <property type="entry name" value="zf-C4_ClpX"/>
    <property type="match status" value="1"/>
</dbReference>
<dbReference type="SUPFAM" id="SSF57716">
    <property type="entry name" value="Glucocorticoid receptor-like (DNA-binding domain)"/>
    <property type="match status" value="1"/>
</dbReference>
<dbReference type="SUPFAM" id="SSF52540">
    <property type="entry name" value="P-loop containing nucleoside triphosphate hydrolases"/>
    <property type="match status" value="1"/>
</dbReference>
<dbReference type="PROSITE" id="PS51902">
    <property type="entry name" value="CLPX_ZB"/>
    <property type="match status" value="1"/>
</dbReference>
<proteinExistence type="inferred from homology"/>